<accession>Q06RA9</accession>
<evidence type="ECO:0000255" key="1">
    <source>
        <dbReference type="HAMAP-Rule" id="MF_00382"/>
    </source>
</evidence>
<evidence type="ECO:0000305" key="2"/>
<feature type="chain" id="PRO_0000276412" description="Large ribosomal subunit protein bL20c">
    <location>
        <begin position="1"/>
        <end position="127"/>
    </location>
</feature>
<geneLocation type="chloroplast"/>
<organism>
    <name type="scientific">Jasminum nudiflorum</name>
    <name type="common">Winter jasmine</name>
    <dbReference type="NCBI Taxonomy" id="126431"/>
    <lineage>
        <taxon>Eukaryota</taxon>
        <taxon>Viridiplantae</taxon>
        <taxon>Streptophyta</taxon>
        <taxon>Embryophyta</taxon>
        <taxon>Tracheophyta</taxon>
        <taxon>Spermatophyta</taxon>
        <taxon>Magnoliopsida</taxon>
        <taxon>eudicotyledons</taxon>
        <taxon>Gunneridae</taxon>
        <taxon>Pentapetalae</taxon>
        <taxon>asterids</taxon>
        <taxon>lamiids</taxon>
        <taxon>Lamiales</taxon>
        <taxon>Oleaceae</taxon>
        <taxon>Jasmineae</taxon>
        <taxon>Jasminum</taxon>
    </lineage>
</organism>
<dbReference type="EMBL" id="DQ673255">
    <property type="protein sequence ID" value="ABG74650.1"/>
    <property type="molecule type" value="Genomic_DNA"/>
</dbReference>
<dbReference type="RefSeq" id="YP_778512.1">
    <property type="nucleotide sequence ID" value="NC_008407.1"/>
</dbReference>
<dbReference type="SMR" id="Q06RA9"/>
<dbReference type="GeneID" id="4319731"/>
<dbReference type="GO" id="GO:0009507">
    <property type="term" value="C:chloroplast"/>
    <property type="evidence" value="ECO:0007669"/>
    <property type="project" value="UniProtKB-SubCell"/>
</dbReference>
<dbReference type="GO" id="GO:1990904">
    <property type="term" value="C:ribonucleoprotein complex"/>
    <property type="evidence" value="ECO:0007669"/>
    <property type="project" value="UniProtKB-KW"/>
</dbReference>
<dbReference type="GO" id="GO:0005840">
    <property type="term" value="C:ribosome"/>
    <property type="evidence" value="ECO:0007669"/>
    <property type="project" value="UniProtKB-KW"/>
</dbReference>
<dbReference type="GO" id="GO:0019843">
    <property type="term" value="F:rRNA binding"/>
    <property type="evidence" value="ECO:0007669"/>
    <property type="project" value="UniProtKB-UniRule"/>
</dbReference>
<dbReference type="GO" id="GO:0003735">
    <property type="term" value="F:structural constituent of ribosome"/>
    <property type="evidence" value="ECO:0007669"/>
    <property type="project" value="InterPro"/>
</dbReference>
<dbReference type="GO" id="GO:0000027">
    <property type="term" value="P:ribosomal large subunit assembly"/>
    <property type="evidence" value="ECO:0007669"/>
    <property type="project" value="UniProtKB-UniRule"/>
</dbReference>
<dbReference type="GO" id="GO:0006412">
    <property type="term" value="P:translation"/>
    <property type="evidence" value="ECO:0007669"/>
    <property type="project" value="InterPro"/>
</dbReference>
<dbReference type="CDD" id="cd07026">
    <property type="entry name" value="Ribosomal_L20"/>
    <property type="match status" value="1"/>
</dbReference>
<dbReference type="FunFam" id="1.10.1900.20:FF:000001">
    <property type="entry name" value="50S ribosomal protein L20"/>
    <property type="match status" value="1"/>
</dbReference>
<dbReference type="Gene3D" id="6.10.160.10">
    <property type="match status" value="1"/>
</dbReference>
<dbReference type="Gene3D" id="1.10.1900.20">
    <property type="entry name" value="Ribosomal protein L20"/>
    <property type="match status" value="1"/>
</dbReference>
<dbReference type="HAMAP" id="MF_00382">
    <property type="entry name" value="Ribosomal_bL20"/>
    <property type="match status" value="1"/>
</dbReference>
<dbReference type="InterPro" id="IPR005813">
    <property type="entry name" value="Ribosomal_bL20"/>
</dbReference>
<dbReference type="InterPro" id="IPR049946">
    <property type="entry name" value="RIBOSOMAL_L20_CS"/>
</dbReference>
<dbReference type="InterPro" id="IPR035566">
    <property type="entry name" value="Ribosomal_protein_bL20_C"/>
</dbReference>
<dbReference type="NCBIfam" id="TIGR01032">
    <property type="entry name" value="rplT_bact"/>
    <property type="match status" value="1"/>
</dbReference>
<dbReference type="PANTHER" id="PTHR10986">
    <property type="entry name" value="39S RIBOSOMAL PROTEIN L20"/>
    <property type="match status" value="1"/>
</dbReference>
<dbReference type="Pfam" id="PF00453">
    <property type="entry name" value="Ribosomal_L20"/>
    <property type="match status" value="1"/>
</dbReference>
<dbReference type="PRINTS" id="PR00062">
    <property type="entry name" value="RIBOSOMALL20"/>
</dbReference>
<dbReference type="SUPFAM" id="SSF74731">
    <property type="entry name" value="Ribosomal protein L20"/>
    <property type="match status" value="1"/>
</dbReference>
<dbReference type="PROSITE" id="PS00937">
    <property type="entry name" value="RIBOSOMAL_L20"/>
    <property type="match status" value="1"/>
</dbReference>
<proteinExistence type="inferred from homology"/>
<keyword id="KW-0150">Chloroplast</keyword>
<keyword id="KW-0934">Plastid</keyword>
<keyword id="KW-0687">Ribonucleoprotein</keyword>
<keyword id="KW-0689">Ribosomal protein</keyword>
<keyword id="KW-0694">RNA-binding</keyword>
<keyword id="KW-0699">rRNA-binding</keyword>
<protein>
    <recommendedName>
        <fullName evidence="1">Large ribosomal subunit protein bL20c</fullName>
    </recommendedName>
    <alternativeName>
        <fullName evidence="2">50S ribosomal protein L20, chloroplastic</fullName>
    </alternativeName>
</protein>
<sequence length="127" mass="15032">MTRIKRGSIARRRRTKAHSFASKFREAHARLTRAITQQQIRALFSADRDRDKQKIDFRRLWITRINALIREKGVFHNYSKFINDLYKSQLLLNRKILAQIAISNRNCLYMIANEIIKKVGFESAVII</sequence>
<reference key="1">
    <citation type="journal article" date="2007" name="Mol. Biol. Evol.">
        <title>Gene relocations within chloroplast genomes of Jasminum and Menodora (Oleaceae) are due to multiple, overlapping inversions.</title>
        <authorList>
            <person name="Lee H.-L."/>
            <person name="Jansen R.K."/>
            <person name="Chumley T.W."/>
            <person name="Kim K.-J."/>
        </authorList>
    </citation>
    <scope>NUCLEOTIDE SEQUENCE [LARGE SCALE GENOMIC DNA]</scope>
</reference>
<name>RK20_JASNU</name>
<gene>
    <name evidence="1" type="primary">rpl20</name>
    <name type="ORF">JNC0756</name>
</gene>
<comment type="function">
    <text evidence="1">Binds directly to 23S ribosomal RNA and is necessary for the in vitro assembly process of the 50S ribosomal subunit. It is not involved in the protein synthesizing functions of that subunit.</text>
</comment>
<comment type="subcellular location">
    <subcellularLocation>
        <location>Plastid</location>
        <location>Chloroplast</location>
    </subcellularLocation>
</comment>
<comment type="similarity">
    <text evidence="1">Belongs to the bacterial ribosomal protein bL20 family.</text>
</comment>